<sequence length="368" mass="39661">MKAVLGLEDGTVIKGTGFGAEGTACGELVFTTQFTGYEEALTDPSYKGQILMFTYPLIGNYGVSGERFQSDNIHAEGLVVREACKKPYHYKSTRSIHKFLEDEGKPGIEGVDTRMLTIGAREHGTMRAALITGSDDGEEAVDMARNFPQVTDEELIARVTCKEPRFIPGAAGAWKGSGKPKHAVVVDLGIKRNIINNLHKRGIDLTLVPATTKPEEIAGYEPDMLFISNGPGDPEKATDAINAVKAFAGTIPVAGICFGHQIISLAMGARTYKLKFGHRGGNQPVKDLIENKIFISSQNHGYAVDADSLEGTGLYVKYLNANDKTVEGVSHKDLDIFSVQFHPEAQAGPLDTEETFFGKVVKVLGGGL</sequence>
<comment type="function">
    <text evidence="1">Small subunit of the glutamine-dependent carbamoyl phosphate synthetase (CPSase). CPSase catalyzes the formation of carbamoyl phosphate from the ammonia moiety of glutamine, carbonate, and phosphate donated by ATP, constituting the first step of 2 biosynthetic pathways, one leading to arginine and/or urea and the other to pyrimidine nucleotides. The small subunit (glutamine amidotransferase) binds and cleaves glutamine to supply the large subunit with the substrate ammonia.</text>
</comment>
<comment type="catalytic activity">
    <reaction evidence="1">
        <text>hydrogencarbonate + L-glutamine + 2 ATP + H2O = carbamoyl phosphate + L-glutamate + 2 ADP + phosphate + 2 H(+)</text>
        <dbReference type="Rhea" id="RHEA:18633"/>
        <dbReference type="ChEBI" id="CHEBI:15377"/>
        <dbReference type="ChEBI" id="CHEBI:15378"/>
        <dbReference type="ChEBI" id="CHEBI:17544"/>
        <dbReference type="ChEBI" id="CHEBI:29985"/>
        <dbReference type="ChEBI" id="CHEBI:30616"/>
        <dbReference type="ChEBI" id="CHEBI:43474"/>
        <dbReference type="ChEBI" id="CHEBI:58228"/>
        <dbReference type="ChEBI" id="CHEBI:58359"/>
        <dbReference type="ChEBI" id="CHEBI:456216"/>
        <dbReference type="EC" id="6.3.5.5"/>
    </reaction>
</comment>
<comment type="catalytic activity">
    <molecule>Carbamoyl phosphate synthase small chain</molecule>
    <reaction evidence="1">
        <text>L-glutamine + H2O = L-glutamate + NH4(+)</text>
        <dbReference type="Rhea" id="RHEA:15889"/>
        <dbReference type="ChEBI" id="CHEBI:15377"/>
        <dbReference type="ChEBI" id="CHEBI:28938"/>
        <dbReference type="ChEBI" id="CHEBI:29985"/>
        <dbReference type="ChEBI" id="CHEBI:58359"/>
    </reaction>
</comment>
<comment type="pathway">
    <text evidence="1">Amino-acid biosynthesis; L-arginine biosynthesis; carbamoyl phosphate from bicarbonate: step 1/1.</text>
</comment>
<comment type="pathway">
    <text evidence="1">Pyrimidine metabolism; UMP biosynthesis via de novo pathway; (S)-dihydroorotate from bicarbonate: step 1/3.</text>
</comment>
<comment type="subunit">
    <text evidence="1">Composed of two chains; the small (or glutamine) chain promotes the hydrolysis of glutamine to ammonia, which is used by the large (or ammonia) chain to synthesize carbamoyl phosphate. Tetramer of heterodimers (alpha,beta)4.</text>
</comment>
<comment type="similarity">
    <text evidence="1">Belongs to the CarA family.</text>
</comment>
<comment type="sequence caution" evidence="2">
    <conflict type="erroneous initiation">
        <sequence resource="EMBL-CDS" id="AAM29735"/>
    </conflict>
</comment>
<feature type="chain" id="PRO_0000112360" description="Carbamoyl phosphate synthase small chain">
    <location>
        <begin position="1"/>
        <end position="368"/>
    </location>
</feature>
<feature type="domain" description="Glutamine amidotransferase type-1" evidence="1">
    <location>
        <begin position="182"/>
        <end position="368"/>
    </location>
</feature>
<feature type="region of interest" description="CPSase" evidence="1">
    <location>
        <begin position="1"/>
        <end position="178"/>
    </location>
</feature>
<feature type="active site" description="Nucleophile" evidence="1">
    <location>
        <position position="257"/>
    </location>
</feature>
<feature type="active site" evidence="1">
    <location>
        <position position="342"/>
    </location>
</feature>
<feature type="active site" evidence="1">
    <location>
        <position position="344"/>
    </location>
</feature>
<feature type="binding site" evidence="1">
    <location>
        <position position="45"/>
    </location>
    <ligand>
        <name>L-glutamine</name>
        <dbReference type="ChEBI" id="CHEBI:58359"/>
    </ligand>
</feature>
<feature type="binding site" evidence="1">
    <location>
        <position position="230"/>
    </location>
    <ligand>
        <name>L-glutamine</name>
        <dbReference type="ChEBI" id="CHEBI:58359"/>
    </ligand>
</feature>
<feature type="binding site" evidence="1">
    <location>
        <position position="232"/>
    </location>
    <ligand>
        <name>L-glutamine</name>
        <dbReference type="ChEBI" id="CHEBI:58359"/>
    </ligand>
</feature>
<feature type="binding site" evidence="1">
    <location>
        <position position="258"/>
    </location>
    <ligand>
        <name>L-glutamine</name>
        <dbReference type="ChEBI" id="CHEBI:58359"/>
    </ligand>
</feature>
<feature type="binding site" evidence="1">
    <location>
        <position position="261"/>
    </location>
    <ligand>
        <name>L-glutamine</name>
        <dbReference type="ChEBI" id="CHEBI:58359"/>
    </ligand>
</feature>
<feature type="binding site" evidence="1">
    <location>
        <position position="299"/>
    </location>
    <ligand>
        <name>L-glutamine</name>
        <dbReference type="ChEBI" id="CHEBI:58359"/>
    </ligand>
</feature>
<feature type="binding site" evidence="1">
    <location>
        <position position="301"/>
    </location>
    <ligand>
        <name>L-glutamine</name>
        <dbReference type="ChEBI" id="CHEBI:58359"/>
    </ligand>
</feature>
<feature type="binding site" evidence="1">
    <location>
        <position position="302"/>
    </location>
    <ligand>
        <name>L-glutamine</name>
        <dbReference type="ChEBI" id="CHEBI:58359"/>
    </ligand>
</feature>
<accession>Q8Q0U4</accession>
<proteinExistence type="inferred from homology"/>
<evidence type="ECO:0000255" key="1">
    <source>
        <dbReference type="HAMAP-Rule" id="MF_01209"/>
    </source>
</evidence>
<evidence type="ECO:0000305" key="2"/>
<name>CARA_METMA</name>
<dbReference type="EC" id="6.3.5.5" evidence="1"/>
<dbReference type="EMBL" id="AE008384">
    <property type="protein sequence ID" value="AAM29735.1"/>
    <property type="status" value="ALT_INIT"/>
    <property type="molecule type" value="Genomic_DNA"/>
</dbReference>
<dbReference type="RefSeq" id="WP_048040213.1">
    <property type="nucleotide sequence ID" value="NC_003901.1"/>
</dbReference>
<dbReference type="SMR" id="Q8Q0U4"/>
<dbReference type="GeneID" id="82159005"/>
<dbReference type="KEGG" id="mma:MM_0039"/>
<dbReference type="PATRIC" id="fig|192952.21.peg.51"/>
<dbReference type="eggNOG" id="arCOG00064">
    <property type="taxonomic scope" value="Archaea"/>
</dbReference>
<dbReference type="HOGENOM" id="CLU_035901_2_1_2"/>
<dbReference type="UniPathway" id="UPA00068">
    <property type="reaction ID" value="UER00171"/>
</dbReference>
<dbReference type="UniPathway" id="UPA00070">
    <property type="reaction ID" value="UER00115"/>
</dbReference>
<dbReference type="Proteomes" id="UP000000595">
    <property type="component" value="Chromosome"/>
</dbReference>
<dbReference type="GO" id="GO:0005524">
    <property type="term" value="F:ATP binding"/>
    <property type="evidence" value="ECO:0007669"/>
    <property type="project" value="UniProtKB-UniRule"/>
</dbReference>
<dbReference type="GO" id="GO:0004088">
    <property type="term" value="F:carbamoyl-phosphate synthase (glutamine-hydrolyzing) activity"/>
    <property type="evidence" value="ECO:0007669"/>
    <property type="project" value="UniProtKB-UniRule"/>
</dbReference>
<dbReference type="GO" id="GO:0004359">
    <property type="term" value="F:glutaminase activity"/>
    <property type="evidence" value="ECO:0007669"/>
    <property type="project" value="RHEA"/>
</dbReference>
<dbReference type="GO" id="GO:0006207">
    <property type="term" value="P:'de novo' pyrimidine nucleobase biosynthetic process"/>
    <property type="evidence" value="ECO:0007669"/>
    <property type="project" value="InterPro"/>
</dbReference>
<dbReference type="GO" id="GO:0044205">
    <property type="term" value="P:'de novo' UMP biosynthetic process"/>
    <property type="evidence" value="ECO:0007669"/>
    <property type="project" value="UniProtKB-UniRule"/>
</dbReference>
<dbReference type="GO" id="GO:0006541">
    <property type="term" value="P:glutamine metabolic process"/>
    <property type="evidence" value="ECO:0007669"/>
    <property type="project" value="InterPro"/>
</dbReference>
<dbReference type="GO" id="GO:0006526">
    <property type="term" value="P:L-arginine biosynthetic process"/>
    <property type="evidence" value="ECO:0007669"/>
    <property type="project" value="UniProtKB-UniRule"/>
</dbReference>
<dbReference type="CDD" id="cd01744">
    <property type="entry name" value="GATase1_CPSase"/>
    <property type="match status" value="1"/>
</dbReference>
<dbReference type="FunFam" id="3.40.50.880:FF:000126">
    <property type="entry name" value="Carbamoyl-phosphate synthase small chain"/>
    <property type="match status" value="1"/>
</dbReference>
<dbReference type="FunFam" id="3.50.30.20:FF:000001">
    <property type="entry name" value="Carbamoyl-phosphate synthase small chain"/>
    <property type="match status" value="1"/>
</dbReference>
<dbReference type="Gene3D" id="3.40.50.880">
    <property type="match status" value="1"/>
</dbReference>
<dbReference type="Gene3D" id="3.50.30.20">
    <property type="entry name" value="Carbamoyl-phosphate synthase small subunit, N-terminal domain"/>
    <property type="match status" value="1"/>
</dbReference>
<dbReference type="HAMAP" id="MF_01209">
    <property type="entry name" value="CPSase_S_chain"/>
    <property type="match status" value="1"/>
</dbReference>
<dbReference type="InterPro" id="IPR050472">
    <property type="entry name" value="Anth_synth/Amidotransfase"/>
</dbReference>
<dbReference type="InterPro" id="IPR006274">
    <property type="entry name" value="CarbamoylP_synth_ssu"/>
</dbReference>
<dbReference type="InterPro" id="IPR002474">
    <property type="entry name" value="CarbamoylP_synth_ssu_N"/>
</dbReference>
<dbReference type="InterPro" id="IPR036480">
    <property type="entry name" value="CarbP_synth_ssu_N_sf"/>
</dbReference>
<dbReference type="InterPro" id="IPR029062">
    <property type="entry name" value="Class_I_gatase-like"/>
</dbReference>
<dbReference type="InterPro" id="IPR035686">
    <property type="entry name" value="CPSase_GATase1"/>
</dbReference>
<dbReference type="InterPro" id="IPR017926">
    <property type="entry name" value="GATASE"/>
</dbReference>
<dbReference type="NCBIfam" id="TIGR01368">
    <property type="entry name" value="CPSaseIIsmall"/>
    <property type="match status" value="1"/>
</dbReference>
<dbReference type="NCBIfam" id="NF009475">
    <property type="entry name" value="PRK12838.1"/>
    <property type="match status" value="1"/>
</dbReference>
<dbReference type="PANTHER" id="PTHR43418:SF7">
    <property type="entry name" value="CARBAMOYL-PHOSPHATE SYNTHASE SMALL CHAIN"/>
    <property type="match status" value="1"/>
</dbReference>
<dbReference type="PANTHER" id="PTHR43418">
    <property type="entry name" value="MULTIFUNCTIONAL TRYPTOPHAN BIOSYNTHESIS PROTEIN-RELATED"/>
    <property type="match status" value="1"/>
</dbReference>
<dbReference type="Pfam" id="PF00988">
    <property type="entry name" value="CPSase_sm_chain"/>
    <property type="match status" value="1"/>
</dbReference>
<dbReference type="Pfam" id="PF00117">
    <property type="entry name" value="GATase"/>
    <property type="match status" value="1"/>
</dbReference>
<dbReference type="PRINTS" id="PR00097">
    <property type="entry name" value="ANTSNTHASEII"/>
</dbReference>
<dbReference type="PRINTS" id="PR00099">
    <property type="entry name" value="CPSGATASE"/>
</dbReference>
<dbReference type="PRINTS" id="PR00096">
    <property type="entry name" value="GATASE"/>
</dbReference>
<dbReference type="SMART" id="SM01097">
    <property type="entry name" value="CPSase_sm_chain"/>
    <property type="match status" value="1"/>
</dbReference>
<dbReference type="SUPFAM" id="SSF52021">
    <property type="entry name" value="Carbamoyl phosphate synthetase, small subunit N-terminal domain"/>
    <property type="match status" value="1"/>
</dbReference>
<dbReference type="SUPFAM" id="SSF52317">
    <property type="entry name" value="Class I glutamine amidotransferase-like"/>
    <property type="match status" value="1"/>
</dbReference>
<dbReference type="PROSITE" id="PS51273">
    <property type="entry name" value="GATASE_TYPE_1"/>
    <property type="match status" value="1"/>
</dbReference>
<organism>
    <name type="scientific">Methanosarcina mazei (strain ATCC BAA-159 / DSM 3647 / Goe1 / Go1 / JCM 11833 / OCM 88)</name>
    <name type="common">Methanosarcina frisia</name>
    <dbReference type="NCBI Taxonomy" id="192952"/>
    <lineage>
        <taxon>Archaea</taxon>
        <taxon>Methanobacteriati</taxon>
        <taxon>Methanobacteriota</taxon>
        <taxon>Stenosarchaea group</taxon>
        <taxon>Methanomicrobia</taxon>
        <taxon>Methanosarcinales</taxon>
        <taxon>Methanosarcinaceae</taxon>
        <taxon>Methanosarcina</taxon>
    </lineage>
</organism>
<reference key="1">
    <citation type="journal article" date="2002" name="J. Mol. Microbiol. Biotechnol.">
        <title>The genome of Methanosarcina mazei: evidence for lateral gene transfer between Bacteria and Archaea.</title>
        <authorList>
            <person name="Deppenmeier U."/>
            <person name="Johann A."/>
            <person name="Hartsch T."/>
            <person name="Merkl R."/>
            <person name="Schmitz R.A."/>
            <person name="Martinez-Arias R."/>
            <person name="Henne A."/>
            <person name="Wiezer A."/>
            <person name="Baeumer S."/>
            <person name="Jacobi C."/>
            <person name="Brueggemann H."/>
            <person name="Lienard T."/>
            <person name="Christmann A."/>
            <person name="Boemecke M."/>
            <person name="Steckel S."/>
            <person name="Bhattacharyya A."/>
            <person name="Lykidis A."/>
            <person name="Overbeek R."/>
            <person name="Klenk H.-P."/>
            <person name="Gunsalus R.P."/>
            <person name="Fritz H.-J."/>
            <person name="Gottschalk G."/>
        </authorList>
    </citation>
    <scope>NUCLEOTIDE SEQUENCE [LARGE SCALE GENOMIC DNA]</scope>
    <source>
        <strain>ATCC BAA-159 / DSM 3647 / Goe1 / Go1 / JCM 11833 / OCM 88</strain>
    </source>
</reference>
<protein>
    <recommendedName>
        <fullName evidence="1">Carbamoyl phosphate synthase small chain</fullName>
        <ecNumber evidence="1">6.3.5.5</ecNumber>
    </recommendedName>
    <alternativeName>
        <fullName evidence="1">Carbamoyl phosphate synthetase glutamine chain</fullName>
    </alternativeName>
</protein>
<gene>
    <name evidence="1" type="primary">carA</name>
    <name type="ordered locus">MM_0039</name>
</gene>
<keyword id="KW-0028">Amino-acid biosynthesis</keyword>
<keyword id="KW-0055">Arginine biosynthesis</keyword>
<keyword id="KW-0067">ATP-binding</keyword>
<keyword id="KW-0315">Glutamine amidotransferase</keyword>
<keyword id="KW-0436">Ligase</keyword>
<keyword id="KW-0547">Nucleotide-binding</keyword>
<keyword id="KW-0665">Pyrimidine biosynthesis</keyword>